<accession>P52767</accession>
<proteinExistence type="inferred from homology"/>
<reference key="1">
    <citation type="journal article" date="1994" name="Proc. Natl. Acad. Sci. U.S.A.">
        <title>Loss of all ndh genes as determined by sequencing the entire chloroplast genome of the black pine Pinus thunbergii.</title>
        <authorList>
            <person name="Wakasugi T."/>
            <person name="Tsudzuki J."/>
            <person name="Ito S."/>
            <person name="Nakashima K."/>
            <person name="Tsudzuki T."/>
            <person name="Sugiura M."/>
        </authorList>
    </citation>
    <scope>NUCLEOTIDE SEQUENCE [LARGE SCALE GENOMIC DNA]</scope>
</reference>
<evidence type="ECO:0000255" key="1">
    <source>
        <dbReference type="HAMAP-Rule" id="MF_01342"/>
    </source>
</evidence>
<evidence type="ECO:0000305" key="2"/>
<feature type="chain" id="PRO_0000062306" description="Large ribosomal subunit protein uL16c">
    <location>
        <begin position="1"/>
        <end position="134"/>
    </location>
</feature>
<geneLocation type="chloroplast"/>
<dbReference type="EMBL" id="D17510">
    <property type="protein sequence ID" value="BAA23473.1"/>
    <property type="molecule type" value="Genomic_DNA"/>
</dbReference>
<dbReference type="PIR" id="T07525">
    <property type="entry name" value="T07525"/>
</dbReference>
<dbReference type="RefSeq" id="NP_042444.1">
    <property type="nucleotide sequence ID" value="NC_001631.1"/>
</dbReference>
<dbReference type="SMR" id="P52767"/>
<dbReference type="GeneID" id="809078"/>
<dbReference type="GO" id="GO:0009507">
    <property type="term" value="C:chloroplast"/>
    <property type="evidence" value="ECO:0007669"/>
    <property type="project" value="UniProtKB-SubCell"/>
</dbReference>
<dbReference type="GO" id="GO:0005762">
    <property type="term" value="C:mitochondrial large ribosomal subunit"/>
    <property type="evidence" value="ECO:0007669"/>
    <property type="project" value="TreeGrafter"/>
</dbReference>
<dbReference type="GO" id="GO:0019843">
    <property type="term" value="F:rRNA binding"/>
    <property type="evidence" value="ECO:0007669"/>
    <property type="project" value="InterPro"/>
</dbReference>
<dbReference type="GO" id="GO:0003735">
    <property type="term" value="F:structural constituent of ribosome"/>
    <property type="evidence" value="ECO:0007669"/>
    <property type="project" value="InterPro"/>
</dbReference>
<dbReference type="GO" id="GO:0032543">
    <property type="term" value="P:mitochondrial translation"/>
    <property type="evidence" value="ECO:0007669"/>
    <property type="project" value="TreeGrafter"/>
</dbReference>
<dbReference type="CDD" id="cd01433">
    <property type="entry name" value="Ribosomal_L16_L10e"/>
    <property type="match status" value="1"/>
</dbReference>
<dbReference type="FunFam" id="3.90.1170.10:FF:000001">
    <property type="entry name" value="50S ribosomal protein L16"/>
    <property type="match status" value="1"/>
</dbReference>
<dbReference type="Gene3D" id="3.90.1170.10">
    <property type="entry name" value="Ribosomal protein L10e/L16"/>
    <property type="match status" value="1"/>
</dbReference>
<dbReference type="HAMAP" id="MF_01342">
    <property type="entry name" value="Ribosomal_uL16"/>
    <property type="match status" value="1"/>
</dbReference>
<dbReference type="InterPro" id="IPR047873">
    <property type="entry name" value="Ribosomal_uL16"/>
</dbReference>
<dbReference type="InterPro" id="IPR000114">
    <property type="entry name" value="Ribosomal_uL16_bact-type"/>
</dbReference>
<dbReference type="InterPro" id="IPR020798">
    <property type="entry name" value="Ribosomal_uL16_CS"/>
</dbReference>
<dbReference type="InterPro" id="IPR016180">
    <property type="entry name" value="Ribosomal_uL16_dom"/>
</dbReference>
<dbReference type="InterPro" id="IPR036920">
    <property type="entry name" value="Ribosomal_uL16_sf"/>
</dbReference>
<dbReference type="NCBIfam" id="TIGR01164">
    <property type="entry name" value="rplP_bact"/>
    <property type="match status" value="1"/>
</dbReference>
<dbReference type="PANTHER" id="PTHR12220">
    <property type="entry name" value="50S/60S RIBOSOMAL PROTEIN L16"/>
    <property type="match status" value="1"/>
</dbReference>
<dbReference type="PANTHER" id="PTHR12220:SF13">
    <property type="entry name" value="LARGE RIBOSOMAL SUBUNIT PROTEIN UL16M"/>
    <property type="match status" value="1"/>
</dbReference>
<dbReference type="Pfam" id="PF00252">
    <property type="entry name" value="Ribosomal_L16"/>
    <property type="match status" value="1"/>
</dbReference>
<dbReference type="PRINTS" id="PR00060">
    <property type="entry name" value="RIBOSOMALL16"/>
</dbReference>
<dbReference type="SUPFAM" id="SSF54686">
    <property type="entry name" value="Ribosomal protein L16p/L10e"/>
    <property type="match status" value="1"/>
</dbReference>
<dbReference type="PROSITE" id="PS00586">
    <property type="entry name" value="RIBOSOMAL_L16_1"/>
    <property type="match status" value="1"/>
</dbReference>
<dbReference type="PROSITE" id="PS00701">
    <property type="entry name" value="RIBOSOMAL_L16_2"/>
    <property type="match status" value="1"/>
</dbReference>
<sequence length="134" mass="15275">MLSPKRTKFRKQHRGRMKGVSYRGNRICFGRFALQALEPAWITSGQIEAGRRTINRYARRGGKIWVRIFPDKPITMRPAETRMGSGKGSPEYWVSVIRPGRILYEMGGVSETVARAAARIAAYKMPIRTQFVTT</sequence>
<comment type="subunit">
    <text evidence="1">Part of the 50S ribosomal subunit.</text>
</comment>
<comment type="subcellular location">
    <subcellularLocation>
        <location>Plastid</location>
        <location>Chloroplast</location>
    </subcellularLocation>
</comment>
<comment type="similarity">
    <text evidence="1">Belongs to the universal ribosomal protein uL16 family.</text>
</comment>
<keyword id="KW-0150">Chloroplast</keyword>
<keyword id="KW-0934">Plastid</keyword>
<keyword id="KW-0687">Ribonucleoprotein</keyword>
<keyword id="KW-0689">Ribosomal protein</keyword>
<name>RK16_PINTH</name>
<protein>
    <recommendedName>
        <fullName evidence="1">Large ribosomal subunit protein uL16c</fullName>
    </recommendedName>
    <alternativeName>
        <fullName evidence="2">50S ribosomal protein L16, chloroplastic</fullName>
    </alternativeName>
</protein>
<gene>
    <name evidence="1" type="primary">rpl16</name>
</gene>
<organism>
    <name type="scientific">Pinus thunbergii</name>
    <name type="common">Japanese black pine</name>
    <name type="synonym">Pinus thunbergiana</name>
    <dbReference type="NCBI Taxonomy" id="3350"/>
    <lineage>
        <taxon>Eukaryota</taxon>
        <taxon>Viridiplantae</taxon>
        <taxon>Streptophyta</taxon>
        <taxon>Embryophyta</taxon>
        <taxon>Tracheophyta</taxon>
        <taxon>Spermatophyta</taxon>
        <taxon>Pinopsida</taxon>
        <taxon>Pinidae</taxon>
        <taxon>Conifers I</taxon>
        <taxon>Pinales</taxon>
        <taxon>Pinaceae</taxon>
        <taxon>Pinus</taxon>
        <taxon>Pinus subgen. Pinus</taxon>
    </lineage>
</organism>